<keyword id="KW-0025">Alternative splicing</keyword>
<keyword id="KW-0539">Nucleus</keyword>
<keyword id="KW-0597">Phosphoprotein</keyword>
<keyword id="KW-1267">Proteomics identification</keyword>
<keyword id="KW-1185">Reference proteome</keyword>
<keyword id="KW-0879">Wnt signaling pathway</keyword>
<sequence>MVMVLSESLSTRGADSIACGTFSRELHTPKKMSQGPTLFSCGIMENDRWRDLDRKCPLQIDQPSTSIWECLPEKDSSLWHREAVTACAVTSLIKDLSISDHNGNPSAPPSKRQCRSLSFSDEMSSCRTSWRPLGSKVWTPVEKRRCYSGGSVQRYSNGFSTMQRSSSFSLPSRANVLSSPCDQAGLHHRFGGQPCQGVPGSAPCGQAGDTWSPDLHPVGGGRLDLQRSLSCSHEQFSFVEYCPPSANSTPASTPELARRSSGLSRSRSQPCVLNDKKVGVKRRRPEEVQEQRPSLDLAKMAQNCQTFSSLSCLSAGTEDCGPQSPFARHVSNTRAWTALLSASGPGGRTPAGTPVPEPLPPSFDDHLACQEDLSCEESDSCALDEDCGRRAEPAAAWRDRGAPGNSLCSLDGELDIEQIEKN</sequence>
<name>FA53B_HUMAN</name>
<reference key="1">
    <citation type="journal article" date="1995" name="DNA Res.">
        <title>Prediction of the coding sequences of unidentified human genes. IV. The coding sequences of 40 new genes (KIAA0121-KIAA0160) deduced by analysis of cDNA clones from human cell line KG-1.</title>
        <authorList>
            <person name="Nagase T."/>
            <person name="Seki N."/>
            <person name="Tanaka A."/>
            <person name="Ishikawa K."/>
            <person name="Nomura N."/>
        </authorList>
    </citation>
    <scope>NUCLEOTIDE SEQUENCE [LARGE SCALE MRNA] (ISOFORM 1)</scope>
    <scope>TISSUE SPECIFICITY</scope>
    <source>
        <tissue>Bone marrow</tissue>
    </source>
</reference>
<reference key="2">
    <citation type="journal article" date="2004" name="Nat. Genet.">
        <title>Complete sequencing and characterization of 21,243 full-length human cDNAs.</title>
        <authorList>
            <person name="Ota T."/>
            <person name="Suzuki Y."/>
            <person name="Nishikawa T."/>
            <person name="Otsuki T."/>
            <person name="Sugiyama T."/>
            <person name="Irie R."/>
            <person name="Wakamatsu A."/>
            <person name="Hayashi K."/>
            <person name="Sato H."/>
            <person name="Nagai K."/>
            <person name="Kimura K."/>
            <person name="Makita H."/>
            <person name="Sekine M."/>
            <person name="Obayashi M."/>
            <person name="Nishi T."/>
            <person name="Shibahara T."/>
            <person name="Tanaka T."/>
            <person name="Ishii S."/>
            <person name="Yamamoto J."/>
            <person name="Saito K."/>
            <person name="Kawai Y."/>
            <person name="Isono Y."/>
            <person name="Nakamura Y."/>
            <person name="Nagahari K."/>
            <person name="Murakami K."/>
            <person name="Yasuda T."/>
            <person name="Iwayanagi T."/>
            <person name="Wagatsuma M."/>
            <person name="Shiratori A."/>
            <person name="Sudo H."/>
            <person name="Hosoiri T."/>
            <person name="Kaku Y."/>
            <person name="Kodaira H."/>
            <person name="Kondo H."/>
            <person name="Sugawara M."/>
            <person name="Takahashi M."/>
            <person name="Kanda K."/>
            <person name="Yokoi T."/>
            <person name="Furuya T."/>
            <person name="Kikkawa E."/>
            <person name="Omura Y."/>
            <person name="Abe K."/>
            <person name="Kamihara K."/>
            <person name="Katsuta N."/>
            <person name="Sato K."/>
            <person name="Tanikawa M."/>
            <person name="Yamazaki M."/>
            <person name="Ninomiya K."/>
            <person name="Ishibashi T."/>
            <person name="Yamashita H."/>
            <person name="Murakawa K."/>
            <person name="Fujimori K."/>
            <person name="Tanai H."/>
            <person name="Kimata M."/>
            <person name="Watanabe M."/>
            <person name="Hiraoka S."/>
            <person name="Chiba Y."/>
            <person name="Ishida S."/>
            <person name="Ono Y."/>
            <person name="Takiguchi S."/>
            <person name="Watanabe S."/>
            <person name="Yosida M."/>
            <person name="Hotuta T."/>
            <person name="Kusano J."/>
            <person name="Kanehori K."/>
            <person name="Takahashi-Fujii A."/>
            <person name="Hara H."/>
            <person name="Tanase T.-O."/>
            <person name="Nomura Y."/>
            <person name="Togiya S."/>
            <person name="Komai F."/>
            <person name="Hara R."/>
            <person name="Takeuchi K."/>
            <person name="Arita M."/>
            <person name="Imose N."/>
            <person name="Musashino K."/>
            <person name="Yuuki H."/>
            <person name="Oshima A."/>
            <person name="Sasaki N."/>
            <person name="Aotsuka S."/>
            <person name="Yoshikawa Y."/>
            <person name="Matsunawa H."/>
            <person name="Ichihara T."/>
            <person name="Shiohata N."/>
            <person name="Sano S."/>
            <person name="Moriya S."/>
            <person name="Momiyama H."/>
            <person name="Satoh N."/>
            <person name="Takami S."/>
            <person name="Terashima Y."/>
            <person name="Suzuki O."/>
            <person name="Nakagawa S."/>
            <person name="Senoh A."/>
            <person name="Mizoguchi H."/>
            <person name="Goto Y."/>
            <person name="Shimizu F."/>
            <person name="Wakebe H."/>
            <person name="Hishigaki H."/>
            <person name="Watanabe T."/>
            <person name="Sugiyama A."/>
            <person name="Takemoto M."/>
            <person name="Kawakami B."/>
            <person name="Yamazaki M."/>
            <person name="Watanabe K."/>
            <person name="Kumagai A."/>
            <person name="Itakura S."/>
            <person name="Fukuzumi Y."/>
            <person name="Fujimori Y."/>
            <person name="Komiyama M."/>
            <person name="Tashiro H."/>
            <person name="Tanigami A."/>
            <person name="Fujiwara T."/>
            <person name="Ono T."/>
            <person name="Yamada K."/>
            <person name="Fujii Y."/>
            <person name="Ozaki K."/>
            <person name="Hirao M."/>
            <person name="Ohmori Y."/>
            <person name="Kawabata A."/>
            <person name="Hikiji T."/>
            <person name="Kobatake N."/>
            <person name="Inagaki H."/>
            <person name="Ikema Y."/>
            <person name="Okamoto S."/>
            <person name="Okitani R."/>
            <person name="Kawakami T."/>
            <person name="Noguchi S."/>
            <person name="Itoh T."/>
            <person name="Shigeta K."/>
            <person name="Senba T."/>
            <person name="Matsumura K."/>
            <person name="Nakajima Y."/>
            <person name="Mizuno T."/>
            <person name="Morinaga M."/>
            <person name="Sasaki M."/>
            <person name="Togashi T."/>
            <person name="Oyama M."/>
            <person name="Hata H."/>
            <person name="Watanabe M."/>
            <person name="Komatsu T."/>
            <person name="Mizushima-Sugano J."/>
            <person name="Satoh T."/>
            <person name="Shirai Y."/>
            <person name="Takahashi Y."/>
            <person name="Nakagawa K."/>
            <person name="Okumura K."/>
            <person name="Nagase T."/>
            <person name="Nomura N."/>
            <person name="Kikuchi H."/>
            <person name="Masuho Y."/>
            <person name="Yamashita R."/>
            <person name="Nakai K."/>
            <person name="Yada T."/>
            <person name="Nakamura Y."/>
            <person name="Ohara O."/>
            <person name="Isogai T."/>
            <person name="Sugano S."/>
        </authorList>
    </citation>
    <scope>NUCLEOTIDE SEQUENCE [LARGE SCALE MRNA]</scope>
    <source>
        <tissue>Hippocampus</tissue>
    </source>
</reference>
<reference key="3">
    <citation type="journal article" date="2004" name="Nature">
        <title>The DNA sequence and comparative analysis of human chromosome 10.</title>
        <authorList>
            <person name="Deloukas P."/>
            <person name="Earthrowl M.E."/>
            <person name="Grafham D.V."/>
            <person name="Rubenfield M."/>
            <person name="French L."/>
            <person name="Steward C.A."/>
            <person name="Sims S.K."/>
            <person name="Jones M.C."/>
            <person name="Searle S."/>
            <person name="Scott C."/>
            <person name="Howe K."/>
            <person name="Hunt S.E."/>
            <person name="Andrews T.D."/>
            <person name="Gilbert J.G.R."/>
            <person name="Swarbreck D."/>
            <person name="Ashurst J.L."/>
            <person name="Taylor A."/>
            <person name="Battles J."/>
            <person name="Bird C.P."/>
            <person name="Ainscough R."/>
            <person name="Almeida J.P."/>
            <person name="Ashwell R.I.S."/>
            <person name="Ambrose K.D."/>
            <person name="Babbage A.K."/>
            <person name="Bagguley C.L."/>
            <person name="Bailey J."/>
            <person name="Banerjee R."/>
            <person name="Bates K."/>
            <person name="Beasley H."/>
            <person name="Bray-Allen S."/>
            <person name="Brown A.J."/>
            <person name="Brown J.Y."/>
            <person name="Burford D.C."/>
            <person name="Burrill W."/>
            <person name="Burton J."/>
            <person name="Cahill P."/>
            <person name="Camire D."/>
            <person name="Carter N.P."/>
            <person name="Chapman J.C."/>
            <person name="Clark S.Y."/>
            <person name="Clarke G."/>
            <person name="Clee C.M."/>
            <person name="Clegg S."/>
            <person name="Corby N."/>
            <person name="Coulson A."/>
            <person name="Dhami P."/>
            <person name="Dutta I."/>
            <person name="Dunn M."/>
            <person name="Faulkner L."/>
            <person name="Frankish A."/>
            <person name="Frankland J.A."/>
            <person name="Garner P."/>
            <person name="Garnett J."/>
            <person name="Gribble S."/>
            <person name="Griffiths C."/>
            <person name="Grocock R."/>
            <person name="Gustafson E."/>
            <person name="Hammond S."/>
            <person name="Harley J.L."/>
            <person name="Hart E."/>
            <person name="Heath P.D."/>
            <person name="Ho T.P."/>
            <person name="Hopkins B."/>
            <person name="Horne J."/>
            <person name="Howden P.J."/>
            <person name="Huckle E."/>
            <person name="Hynds C."/>
            <person name="Johnson C."/>
            <person name="Johnson D."/>
            <person name="Kana A."/>
            <person name="Kay M."/>
            <person name="Kimberley A.M."/>
            <person name="Kershaw J.K."/>
            <person name="Kokkinaki M."/>
            <person name="Laird G.K."/>
            <person name="Lawlor S."/>
            <person name="Lee H.M."/>
            <person name="Leongamornlert D.A."/>
            <person name="Laird G."/>
            <person name="Lloyd C."/>
            <person name="Lloyd D.M."/>
            <person name="Loveland J."/>
            <person name="Lovell J."/>
            <person name="McLaren S."/>
            <person name="McLay K.E."/>
            <person name="McMurray A."/>
            <person name="Mashreghi-Mohammadi M."/>
            <person name="Matthews L."/>
            <person name="Milne S."/>
            <person name="Nickerson T."/>
            <person name="Nguyen M."/>
            <person name="Overton-Larty E."/>
            <person name="Palmer S.A."/>
            <person name="Pearce A.V."/>
            <person name="Peck A.I."/>
            <person name="Pelan S."/>
            <person name="Phillimore B."/>
            <person name="Porter K."/>
            <person name="Rice C.M."/>
            <person name="Rogosin A."/>
            <person name="Ross M.T."/>
            <person name="Sarafidou T."/>
            <person name="Sehra H.K."/>
            <person name="Shownkeen R."/>
            <person name="Skuce C.D."/>
            <person name="Smith M."/>
            <person name="Standring L."/>
            <person name="Sycamore N."/>
            <person name="Tester J."/>
            <person name="Thorpe A."/>
            <person name="Torcasso W."/>
            <person name="Tracey A."/>
            <person name="Tromans A."/>
            <person name="Tsolas J."/>
            <person name="Wall M."/>
            <person name="Walsh J."/>
            <person name="Wang H."/>
            <person name="Weinstock K."/>
            <person name="West A.P."/>
            <person name="Willey D.L."/>
            <person name="Whitehead S.L."/>
            <person name="Wilming L."/>
            <person name="Wray P.W."/>
            <person name="Young L."/>
            <person name="Chen Y."/>
            <person name="Lovering R.C."/>
            <person name="Moschonas N.K."/>
            <person name="Siebert R."/>
            <person name="Fechtel K."/>
            <person name="Bentley D."/>
            <person name="Durbin R.M."/>
            <person name="Hubbard T."/>
            <person name="Doucette-Stamm L."/>
            <person name="Beck S."/>
            <person name="Smith D.R."/>
            <person name="Rogers J."/>
        </authorList>
    </citation>
    <scope>NUCLEOTIDE SEQUENCE [LARGE SCALE GENOMIC DNA]</scope>
</reference>
<reference key="4">
    <citation type="submission" date="2005-09" db="EMBL/GenBank/DDBJ databases">
        <authorList>
            <person name="Mural R.J."/>
            <person name="Istrail S."/>
            <person name="Sutton G.G."/>
            <person name="Florea L."/>
            <person name="Halpern A.L."/>
            <person name="Mobarry C.M."/>
            <person name="Lippert R."/>
            <person name="Walenz B."/>
            <person name="Shatkay H."/>
            <person name="Dew I."/>
            <person name="Miller J.R."/>
            <person name="Flanigan M.J."/>
            <person name="Edwards N.J."/>
            <person name="Bolanos R."/>
            <person name="Fasulo D."/>
            <person name="Halldorsson B.V."/>
            <person name="Hannenhalli S."/>
            <person name="Turner R."/>
            <person name="Yooseph S."/>
            <person name="Lu F."/>
            <person name="Nusskern D.R."/>
            <person name="Shue B.C."/>
            <person name="Zheng X.H."/>
            <person name="Zhong F."/>
            <person name="Delcher A.L."/>
            <person name="Huson D.H."/>
            <person name="Kravitz S.A."/>
            <person name="Mouchard L."/>
            <person name="Reinert K."/>
            <person name="Remington K.A."/>
            <person name="Clark A.G."/>
            <person name="Waterman M.S."/>
            <person name="Eichler E.E."/>
            <person name="Adams M.D."/>
            <person name="Hunkapiller M.W."/>
            <person name="Myers E.W."/>
            <person name="Venter J.C."/>
        </authorList>
    </citation>
    <scope>NUCLEOTIDE SEQUENCE [LARGE SCALE GENOMIC DNA]</scope>
</reference>
<reference key="5">
    <citation type="journal article" date="2004" name="Genome Res.">
        <title>The status, quality, and expansion of the NIH full-length cDNA project: the Mammalian Gene Collection (MGC).</title>
        <authorList>
            <consortium name="The MGC Project Team"/>
        </authorList>
    </citation>
    <scope>NUCLEOTIDE SEQUENCE [LARGE SCALE MRNA] (ISOFORM 2)</scope>
    <source>
        <tissue>Brain</tissue>
        <tissue>Lung</tissue>
    </source>
</reference>
<reference key="6">
    <citation type="journal article" date="2008" name="Proc. Natl. Acad. Sci. U.S.A.">
        <title>A quantitative atlas of mitotic phosphorylation.</title>
        <authorList>
            <person name="Dephoure N."/>
            <person name="Zhou C."/>
            <person name="Villen J."/>
            <person name="Beausoleil S.A."/>
            <person name="Bakalarski C.E."/>
            <person name="Elledge S.J."/>
            <person name="Gygi S.P."/>
        </authorList>
    </citation>
    <scope>PHOSPHORYLATION [LARGE SCALE ANALYSIS] AT SER-167</scope>
    <scope>IDENTIFICATION BY MASS SPECTROMETRY [LARGE SCALE ANALYSIS]</scope>
    <source>
        <tissue>Cervix carcinoma</tissue>
    </source>
</reference>
<reference key="7">
    <citation type="journal article" date="2013" name="J. Proteome Res.">
        <title>Toward a comprehensive characterization of a human cancer cell phosphoproteome.</title>
        <authorList>
            <person name="Zhou H."/>
            <person name="Di Palma S."/>
            <person name="Preisinger C."/>
            <person name="Peng M."/>
            <person name="Polat A.N."/>
            <person name="Heck A.J."/>
            <person name="Mohammed S."/>
        </authorList>
    </citation>
    <scope>PHOSPHORYLATION [LARGE SCALE ANALYSIS] AT SER-118; SER-167; SER-169; SER-179 AND SER-268</scope>
    <scope>IDENTIFICATION BY MASS SPECTROMETRY [LARGE SCALE ANALYSIS]</scope>
    <source>
        <tissue>Cervix carcinoma</tissue>
        <tissue>Erythroleukemia</tissue>
    </source>
</reference>
<reference key="8">
    <citation type="journal article" date="2014" name="Development">
        <title>Simplet/Fam53b is required for Wnt signal transduction by regulating beta-catenin nuclear localization.</title>
        <authorList>
            <person name="Kizil C."/>
            <person name="Kuechler B."/>
            <person name="Yan J.J."/>
            <person name="Oezhan G."/>
            <person name="Moro E."/>
            <person name="Argenton F."/>
            <person name="Brand M."/>
            <person name="Weidinger G."/>
            <person name="Antos C.L."/>
        </authorList>
    </citation>
    <scope>FUNCTION</scope>
    <scope>SUBCELLULAR LOCATION</scope>
    <scope>INTERACTION WITH CTNNB1</scope>
</reference>
<protein>
    <recommendedName>
        <fullName evidence="10">Protein FAM53B</fullName>
    </recommendedName>
    <alternativeName>
        <fullName evidence="8">Protein simplet</fullName>
    </alternativeName>
</protein>
<comment type="function">
    <text evidence="4">Acts as a regulator of Wnt signaling pathway by regulating beta-catenin (CTNNB1) nuclear localization.</text>
</comment>
<comment type="subunit">
    <text evidence="6">Interacts with CTNNB1.</text>
</comment>
<comment type="interaction">
    <interactant intactId="EBI-7545653">
        <id>Q14153</id>
    </interactant>
    <interactant intactId="EBI-476295">
        <id>P31947</id>
        <label>SFN</label>
    </interactant>
    <organismsDiffer>false</organismsDiffer>
    <experiments>2</experiments>
</comment>
<comment type="interaction">
    <interactant intactId="EBI-7545653">
        <id>Q14153</id>
    </interactant>
    <interactant intactId="EBI-347088">
        <id>P63104</id>
        <label>YWHAZ</label>
    </interactant>
    <organismsDiffer>false</organismsDiffer>
    <experiments>4</experiments>
</comment>
<comment type="interaction">
    <interactant intactId="EBI-12401851">
        <id>Q14153-2</id>
    </interactant>
    <interactant intactId="EBI-349105">
        <id>P63167</id>
        <label>DYNLL1</label>
    </interactant>
    <organismsDiffer>false</organismsDiffer>
    <experiments>3</experiments>
</comment>
<comment type="interaction">
    <interactant intactId="EBI-12401851">
        <id>Q14153-2</id>
    </interactant>
    <interactant intactId="EBI-16439278">
        <id>Q6FHY5</id>
        <label>MEOX2</label>
    </interactant>
    <organismsDiffer>false</organismsDiffer>
    <experiments>3</experiments>
</comment>
<comment type="subcellular location">
    <subcellularLocation>
        <location evidence="4">Nucleus</location>
    </subcellularLocation>
</comment>
<comment type="alternative products">
    <event type="alternative splicing"/>
    <isoform>
        <id>Q14153-1</id>
        <name>1</name>
        <sequence type="displayed"/>
    </isoform>
    <isoform>
        <id>Q14153-2</id>
        <name>2</name>
        <sequence type="described" ref="VSP_009932 VSP_009933"/>
    </isoform>
</comment>
<comment type="tissue specificity">
    <text evidence="5">Detected in skeletal muscle, kidney, spleen, thyroid, testis, ovary, small intestine, colon and peripheral blood.</text>
</comment>
<comment type="similarity">
    <text evidence="10">Belongs to the FAM53 family.</text>
</comment>
<comment type="sequence caution" evidence="10">
    <conflict type="erroneous initiation">
        <sequence resource="EMBL-CDS" id="BAA09489"/>
    </conflict>
</comment>
<dbReference type="EMBL" id="D50930">
    <property type="protein sequence ID" value="BAA09489.2"/>
    <property type="status" value="ALT_INIT"/>
    <property type="molecule type" value="mRNA"/>
</dbReference>
<dbReference type="EMBL" id="AK127343">
    <property type="protein sequence ID" value="BAG54488.1"/>
    <property type="molecule type" value="mRNA"/>
</dbReference>
<dbReference type="EMBL" id="AC068896">
    <property type="status" value="NOT_ANNOTATED_CDS"/>
    <property type="molecule type" value="Genomic_DNA"/>
</dbReference>
<dbReference type="EMBL" id="AL513190">
    <property type="status" value="NOT_ANNOTATED_CDS"/>
    <property type="molecule type" value="Genomic_DNA"/>
</dbReference>
<dbReference type="EMBL" id="CH471066">
    <property type="protein sequence ID" value="EAW49259.1"/>
    <property type="molecule type" value="Genomic_DNA"/>
</dbReference>
<dbReference type="EMBL" id="CH471066">
    <property type="protein sequence ID" value="EAW49260.1"/>
    <property type="molecule type" value="Genomic_DNA"/>
</dbReference>
<dbReference type="EMBL" id="CH471066">
    <property type="protein sequence ID" value="EAW49261.1"/>
    <property type="molecule type" value="Genomic_DNA"/>
</dbReference>
<dbReference type="EMBL" id="CH471066">
    <property type="protein sequence ID" value="EAW49262.1"/>
    <property type="molecule type" value="Genomic_DNA"/>
</dbReference>
<dbReference type="EMBL" id="BC031654">
    <property type="protein sequence ID" value="AAH31654.1"/>
    <property type="molecule type" value="mRNA"/>
</dbReference>
<dbReference type="CCDS" id="CCDS7641.1">
    <molecule id="Q14153-1"/>
</dbReference>
<dbReference type="RefSeq" id="NP_055476.3">
    <molecule id="Q14153-1"/>
    <property type="nucleotide sequence ID" value="NM_014661.3"/>
</dbReference>
<dbReference type="BioGRID" id="115033">
    <property type="interactions" value="18"/>
</dbReference>
<dbReference type="FunCoup" id="Q14153">
    <property type="interactions" value="1294"/>
</dbReference>
<dbReference type="IntAct" id="Q14153">
    <property type="interactions" value="12"/>
</dbReference>
<dbReference type="MINT" id="Q14153"/>
<dbReference type="STRING" id="9606.ENSP00000338532"/>
<dbReference type="GlyGen" id="Q14153">
    <property type="glycosylation" value="2 sites, 1 O-linked glycan (1 site)"/>
</dbReference>
<dbReference type="iPTMnet" id="Q14153"/>
<dbReference type="PhosphoSitePlus" id="Q14153"/>
<dbReference type="BioMuta" id="FAM53B"/>
<dbReference type="DMDM" id="215273981"/>
<dbReference type="jPOST" id="Q14153"/>
<dbReference type="MassIVE" id="Q14153"/>
<dbReference type="PaxDb" id="9606-ENSP00000338532"/>
<dbReference type="PeptideAtlas" id="Q14153"/>
<dbReference type="ProteomicsDB" id="59855">
    <molecule id="Q14153-1"/>
</dbReference>
<dbReference type="ProteomicsDB" id="59856">
    <molecule id="Q14153-2"/>
</dbReference>
<dbReference type="Antibodypedia" id="48489">
    <property type="antibodies" value="41 antibodies from 11 providers"/>
</dbReference>
<dbReference type="DNASU" id="9679"/>
<dbReference type="Ensembl" id="ENST00000280780.6">
    <molecule id="Q14153-2"/>
    <property type="protein sequence ID" value="ENSP00000280780.6"/>
    <property type="gene ID" value="ENSG00000189319.14"/>
</dbReference>
<dbReference type="Ensembl" id="ENST00000337318.8">
    <molecule id="Q14153-1"/>
    <property type="protein sequence ID" value="ENSP00000338532.3"/>
    <property type="gene ID" value="ENSG00000189319.14"/>
</dbReference>
<dbReference type="Ensembl" id="ENST00000392754.7">
    <molecule id="Q14153-1"/>
    <property type="protein sequence ID" value="ENSP00000376509.3"/>
    <property type="gene ID" value="ENSG00000189319.14"/>
</dbReference>
<dbReference type="GeneID" id="9679"/>
<dbReference type="KEGG" id="hsa:9679"/>
<dbReference type="MANE-Select" id="ENST00000337318.8">
    <property type="protein sequence ID" value="ENSP00000338532.3"/>
    <property type="RefSeq nucleotide sequence ID" value="NM_014661.4"/>
    <property type="RefSeq protein sequence ID" value="NP_055476.3"/>
</dbReference>
<dbReference type="UCSC" id="uc001lhv.2">
    <molecule id="Q14153-1"/>
    <property type="organism name" value="human"/>
</dbReference>
<dbReference type="AGR" id="HGNC:28968"/>
<dbReference type="CTD" id="9679"/>
<dbReference type="DisGeNET" id="9679"/>
<dbReference type="GeneCards" id="FAM53B"/>
<dbReference type="HGNC" id="HGNC:28968">
    <property type="gene designation" value="FAM53B"/>
</dbReference>
<dbReference type="HPA" id="ENSG00000189319">
    <property type="expression patterns" value="Low tissue specificity"/>
</dbReference>
<dbReference type="neXtProt" id="NX_Q14153"/>
<dbReference type="OpenTargets" id="ENSG00000189319"/>
<dbReference type="PharmGKB" id="PA134957918"/>
<dbReference type="VEuPathDB" id="HostDB:ENSG00000189319"/>
<dbReference type="eggNOG" id="ENOG502QQM7">
    <property type="taxonomic scope" value="Eukaryota"/>
</dbReference>
<dbReference type="GeneTree" id="ENSGT00530000063371"/>
<dbReference type="HOGENOM" id="CLU_054215_2_0_1"/>
<dbReference type="InParanoid" id="Q14153"/>
<dbReference type="OMA" id="WSPDPNP"/>
<dbReference type="OrthoDB" id="9934966at2759"/>
<dbReference type="PAN-GO" id="Q14153">
    <property type="GO annotations" value="3 GO annotations based on evolutionary models"/>
</dbReference>
<dbReference type="PhylomeDB" id="Q14153"/>
<dbReference type="TreeFam" id="TF332095"/>
<dbReference type="PathwayCommons" id="Q14153"/>
<dbReference type="SignaLink" id="Q14153"/>
<dbReference type="BioGRID-ORCS" id="9679">
    <property type="hits" value="15 hits in 1163 CRISPR screens"/>
</dbReference>
<dbReference type="CD-CODE" id="1A18FFC4">
    <property type="entry name" value="Paraspeckle"/>
</dbReference>
<dbReference type="ChiTaRS" id="FAM53B">
    <property type="organism name" value="human"/>
</dbReference>
<dbReference type="GenomeRNAi" id="9679"/>
<dbReference type="Pharos" id="Q14153">
    <property type="development level" value="Tdark"/>
</dbReference>
<dbReference type="PRO" id="PR:Q14153"/>
<dbReference type="Proteomes" id="UP000005640">
    <property type="component" value="Chromosome 10"/>
</dbReference>
<dbReference type="RNAct" id="Q14153">
    <property type="molecule type" value="protein"/>
</dbReference>
<dbReference type="Bgee" id="ENSG00000189319">
    <property type="expression patterns" value="Expressed in olfactory bulb and 207 other cell types or tissues"/>
</dbReference>
<dbReference type="GO" id="GO:0005634">
    <property type="term" value="C:nucleus"/>
    <property type="evidence" value="ECO:0000314"/>
    <property type="project" value="UniProtKB"/>
</dbReference>
<dbReference type="GO" id="GO:0090263">
    <property type="term" value="P:positive regulation of canonical Wnt signaling pathway"/>
    <property type="evidence" value="ECO:0000315"/>
    <property type="project" value="UniProtKB"/>
</dbReference>
<dbReference type="GO" id="GO:0006606">
    <property type="term" value="P:protein import into nucleus"/>
    <property type="evidence" value="ECO:0000318"/>
    <property type="project" value="GO_Central"/>
</dbReference>
<dbReference type="GO" id="GO:0060828">
    <property type="term" value="P:regulation of canonical Wnt signaling pathway"/>
    <property type="evidence" value="ECO:0000315"/>
    <property type="project" value="UniProtKB"/>
</dbReference>
<dbReference type="GO" id="GO:0016055">
    <property type="term" value="P:Wnt signaling pathway"/>
    <property type="evidence" value="ECO:0007669"/>
    <property type="project" value="UniProtKB-KW"/>
</dbReference>
<dbReference type="InterPro" id="IPR029356">
    <property type="entry name" value="FAM53"/>
</dbReference>
<dbReference type="PANTHER" id="PTHR28567">
    <property type="entry name" value="PROTEIN FAM53A-LIKE ISOFORM X1"/>
    <property type="match status" value="1"/>
</dbReference>
<dbReference type="PANTHER" id="PTHR28567:SF1">
    <property type="entry name" value="PROTEIN FAM53B"/>
    <property type="match status" value="1"/>
</dbReference>
<dbReference type="Pfam" id="PF15242">
    <property type="entry name" value="FAM53"/>
    <property type="match status" value="1"/>
</dbReference>
<organism>
    <name type="scientific">Homo sapiens</name>
    <name type="common">Human</name>
    <dbReference type="NCBI Taxonomy" id="9606"/>
    <lineage>
        <taxon>Eukaryota</taxon>
        <taxon>Metazoa</taxon>
        <taxon>Chordata</taxon>
        <taxon>Craniata</taxon>
        <taxon>Vertebrata</taxon>
        <taxon>Euteleostomi</taxon>
        <taxon>Mammalia</taxon>
        <taxon>Eutheria</taxon>
        <taxon>Euarchontoglires</taxon>
        <taxon>Primates</taxon>
        <taxon>Haplorrhini</taxon>
        <taxon>Catarrhini</taxon>
        <taxon>Hominidae</taxon>
        <taxon>Homo</taxon>
    </lineage>
</organism>
<accession>Q14153</accession>
<accession>D3DRF1</accession>
<accession>Q5VUW1</accession>
<accession>Q5VUW2</accession>
<accession>Q8N5S6</accession>
<proteinExistence type="evidence at protein level"/>
<feature type="chain" id="PRO_0000189544" description="Protein FAM53B">
    <location>
        <begin position="1"/>
        <end position="422"/>
    </location>
</feature>
<feature type="region of interest" description="Disordered" evidence="3">
    <location>
        <begin position="245"/>
        <end position="269"/>
    </location>
</feature>
<feature type="short sequence motif" description="Nuclear localization signal" evidence="1">
    <location>
        <begin position="281"/>
        <end position="284"/>
    </location>
</feature>
<feature type="compositionally biased region" description="Low complexity" evidence="3">
    <location>
        <begin position="245"/>
        <end position="268"/>
    </location>
</feature>
<feature type="modified residue" description="Phosphoserine" evidence="13">
    <location>
        <position position="118"/>
    </location>
</feature>
<feature type="modified residue" description="Phosphoserine" evidence="12 13">
    <location>
        <position position="167"/>
    </location>
</feature>
<feature type="modified residue" description="Phosphoserine" evidence="13">
    <location>
        <position position="169"/>
    </location>
</feature>
<feature type="modified residue" description="Phosphoserine" evidence="13">
    <location>
        <position position="179"/>
    </location>
</feature>
<feature type="modified residue" description="Phosphoserine" evidence="2">
    <location>
        <position position="212"/>
    </location>
</feature>
<feature type="modified residue" description="Phosphoserine" evidence="13">
    <location>
        <position position="268"/>
    </location>
</feature>
<feature type="splice variant" id="VSP_009932" description="In isoform 2." evidence="7">
    <original>NCQ</original>
    <variation>IAP</variation>
    <location>
        <begin position="303"/>
        <end position="305"/>
    </location>
</feature>
<feature type="splice variant" id="VSP_009933" description="In isoform 2." evidence="7">
    <location>
        <begin position="306"/>
        <end position="422"/>
    </location>
</feature>
<feature type="sequence conflict" description="In Ref. 1; BAA09489." evidence="10" ref="1">
    <original>A</original>
    <variation>V</variation>
    <location>
        <position position="368"/>
    </location>
</feature>
<evidence type="ECO:0000250" key="1">
    <source>
        <dbReference type="UniProtKB" id="F1QN48"/>
    </source>
</evidence>
<evidence type="ECO:0000250" key="2">
    <source>
        <dbReference type="UniProtKB" id="Q8BGR5"/>
    </source>
</evidence>
<evidence type="ECO:0000256" key="3">
    <source>
        <dbReference type="SAM" id="MobiDB-lite"/>
    </source>
</evidence>
<evidence type="ECO:0000269" key="4">
    <source>
    </source>
</evidence>
<evidence type="ECO:0000269" key="5">
    <source>
    </source>
</evidence>
<evidence type="ECO:0000269" key="6">
    <source ref="4"/>
</evidence>
<evidence type="ECO:0000303" key="7">
    <source>
    </source>
</evidence>
<evidence type="ECO:0000303" key="8">
    <source>
    </source>
</evidence>
<evidence type="ECO:0000303" key="9">
    <source>
    </source>
</evidence>
<evidence type="ECO:0000305" key="10"/>
<evidence type="ECO:0000312" key="11">
    <source>
        <dbReference type="HGNC" id="HGNC:28968"/>
    </source>
</evidence>
<evidence type="ECO:0007744" key="12">
    <source>
    </source>
</evidence>
<evidence type="ECO:0007744" key="13">
    <source>
    </source>
</evidence>
<gene>
    <name evidence="11" type="primary">FAM53B</name>
    <name evidence="9" type="synonym">KIAA0140</name>
    <name evidence="8" type="synonym">SMP</name>
</gene>